<reference key="1">
    <citation type="journal article" date="1997" name="Nature">
        <title>The complete genome sequence of the hyperthermophilic, sulphate-reducing archaeon Archaeoglobus fulgidus.</title>
        <authorList>
            <person name="Klenk H.-P."/>
            <person name="Clayton R.A."/>
            <person name="Tomb J.-F."/>
            <person name="White O."/>
            <person name="Nelson K.E."/>
            <person name="Ketchum K.A."/>
            <person name="Dodson R.J."/>
            <person name="Gwinn M.L."/>
            <person name="Hickey E.K."/>
            <person name="Peterson J.D."/>
            <person name="Richardson D.L."/>
            <person name="Kerlavage A.R."/>
            <person name="Graham D.E."/>
            <person name="Kyrpides N.C."/>
            <person name="Fleischmann R.D."/>
            <person name="Quackenbush J."/>
            <person name="Lee N.H."/>
            <person name="Sutton G.G."/>
            <person name="Gill S.R."/>
            <person name="Kirkness E.F."/>
            <person name="Dougherty B.A."/>
            <person name="McKenney K."/>
            <person name="Adams M.D."/>
            <person name="Loftus B.J."/>
            <person name="Peterson S.N."/>
            <person name="Reich C.I."/>
            <person name="McNeil L.K."/>
            <person name="Badger J.H."/>
            <person name="Glodek A."/>
            <person name="Zhou L."/>
            <person name="Overbeek R."/>
            <person name="Gocayne J.D."/>
            <person name="Weidman J.F."/>
            <person name="McDonald L.A."/>
            <person name="Utterback T.R."/>
            <person name="Cotton M.D."/>
            <person name="Spriggs T."/>
            <person name="Artiach P."/>
            <person name="Kaine B.P."/>
            <person name="Sykes S.M."/>
            <person name="Sadow P.W."/>
            <person name="D'Andrea K.P."/>
            <person name="Bowman C."/>
            <person name="Fujii C."/>
            <person name="Garland S.A."/>
            <person name="Mason T.M."/>
            <person name="Olsen G.J."/>
            <person name="Fraser C.M."/>
            <person name="Smith H.O."/>
            <person name="Woese C.R."/>
            <person name="Venter J.C."/>
        </authorList>
    </citation>
    <scope>NUCLEOTIDE SEQUENCE [LARGE SCALE GENOMIC DNA]</scope>
    <source>
        <strain>ATCC 49558 / DSM 4304 / JCM 9628 / NBRC 100126 / VC-16</strain>
    </source>
</reference>
<name>Y896_ARCFU</name>
<accession>O29366</accession>
<proteinExistence type="predicted"/>
<dbReference type="EMBL" id="AE000782">
    <property type="protein sequence ID" value="AAB90353.1"/>
    <property type="molecule type" value="Genomic_DNA"/>
</dbReference>
<dbReference type="PIR" id="H69361">
    <property type="entry name" value="H69361"/>
</dbReference>
<dbReference type="STRING" id="224325.AF_0896"/>
<dbReference type="PaxDb" id="224325-AF_0896"/>
<dbReference type="EnsemblBacteria" id="AAB90353">
    <property type="protein sequence ID" value="AAB90353"/>
    <property type="gene ID" value="AF_0896"/>
</dbReference>
<dbReference type="KEGG" id="afu:AF_0896"/>
<dbReference type="eggNOG" id="arCOG06119">
    <property type="taxonomic scope" value="Archaea"/>
</dbReference>
<dbReference type="HOGENOM" id="CLU_759955_0_0_2"/>
<dbReference type="Proteomes" id="UP000002199">
    <property type="component" value="Chromosome"/>
</dbReference>
<organism>
    <name type="scientific">Archaeoglobus fulgidus (strain ATCC 49558 / DSM 4304 / JCM 9628 / NBRC 100126 / VC-16)</name>
    <dbReference type="NCBI Taxonomy" id="224325"/>
    <lineage>
        <taxon>Archaea</taxon>
        <taxon>Methanobacteriati</taxon>
        <taxon>Methanobacteriota</taxon>
        <taxon>Archaeoglobi</taxon>
        <taxon>Archaeoglobales</taxon>
        <taxon>Archaeoglobaceae</taxon>
        <taxon>Archaeoglobus</taxon>
    </lineage>
</organism>
<sequence length="369" mass="43599">MEIMFPIKPPTTERFELSAEFIDYLDRVIKSKEMPTSLKAIFTISNFKSADEFLYDLKKSGFKLISDYGCVFYLTKKSEYGDVRYLALFTENHNPIFFTLATKTKEIPPTLLEYLNKSPYISNLWISLTKMDELVESLKKEYSDQIMGTYFTGTYSPFFKRKALIRPNIERFVEYRGDDAIQIYEEYKKYYGILPRVFEFNLIGYGTYRLDYRGILVIKARSSFNFIYQLMDSIVSEVEKSKQKITRARVLDKFMKTKRKEFKINIKIPWSIKLTEQLECVKFDDFVKVLEPEWQFLPLDIDISENAENSEFLDFSYFRVIDLIKPSEFSVVYNNKNLKIYPSDKLDLGSSLRFFQSVRSSLDPSAYLT</sequence>
<protein>
    <recommendedName>
        <fullName>Uncharacterized protein AF_0896</fullName>
    </recommendedName>
</protein>
<keyword id="KW-1185">Reference proteome</keyword>
<gene>
    <name type="ordered locus">AF_0896</name>
</gene>
<feature type="chain" id="PRO_0000127942" description="Uncharacterized protein AF_0896">
    <location>
        <begin position="1"/>
        <end position="369"/>
    </location>
</feature>